<reference key="1">
    <citation type="journal article" date="2007" name="Genes Dev.">
        <title>New insights into Acinetobacter baumannii pathogenesis revealed by high-density pyrosequencing and transposon mutagenesis.</title>
        <authorList>
            <person name="Smith M.G."/>
            <person name="Gianoulis T.A."/>
            <person name="Pukatzki S."/>
            <person name="Mekalanos J.J."/>
            <person name="Ornston L.N."/>
            <person name="Gerstein M."/>
            <person name="Snyder M."/>
        </authorList>
    </citation>
    <scope>NUCLEOTIDE SEQUENCE [LARGE SCALE GENOMIC DNA]</scope>
    <source>
        <strain>ATCC 17978 / DSM 105126 / CIP 53.77 / LMG 1025 / NCDC KC755 / 5377</strain>
    </source>
</reference>
<gene>
    <name evidence="1" type="primary">lspA</name>
    <name type="ordered locus">A1S_0019</name>
</gene>
<accession>A3M0S2</accession>
<sequence length="176" mass="19911">MPNSQAKKGLFQFYPHNLIWLGLSVLAIVLDQWTKWIASTHLNYADPVPVLPFLNWTLLHNYGAAFSFLSDAGGWQRYFFTSLAGLVSILFVFWLLRMPKKMVVLPVAIALILGGALGNLIDRITLGYVVDFIHVYYQNHHFPAFNIADSAITLGTILLLIDTFFLEKQRPKNSDA</sequence>
<comment type="function">
    <text evidence="1">This protein specifically catalyzes the removal of signal peptides from prolipoproteins.</text>
</comment>
<comment type="catalytic activity">
    <reaction evidence="1">
        <text>Release of signal peptides from bacterial membrane prolipoproteins. Hydrolyzes -Xaa-Yaa-Zaa-|-(S,diacylglyceryl)Cys-, in which Xaa is hydrophobic (preferably Leu), and Yaa (Ala or Ser) and Zaa (Gly or Ala) have small, neutral side chains.</text>
        <dbReference type="EC" id="3.4.23.36"/>
    </reaction>
</comment>
<comment type="pathway">
    <text evidence="1">Protein modification; lipoprotein biosynthesis (signal peptide cleavage).</text>
</comment>
<comment type="subcellular location">
    <subcellularLocation>
        <location evidence="1">Cell inner membrane</location>
        <topology evidence="1">Multi-pass membrane protein</topology>
    </subcellularLocation>
</comment>
<comment type="similarity">
    <text evidence="1">Belongs to the peptidase A8 family.</text>
</comment>
<name>LSPA_ACIBT</name>
<keyword id="KW-0064">Aspartyl protease</keyword>
<keyword id="KW-0997">Cell inner membrane</keyword>
<keyword id="KW-1003">Cell membrane</keyword>
<keyword id="KW-0378">Hydrolase</keyword>
<keyword id="KW-0472">Membrane</keyword>
<keyword id="KW-0645">Protease</keyword>
<keyword id="KW-0812">Transmembrane</keyword>
<keyword id="KW-1133">Transmembrane helix</keyword>
<proteinExistence type="inferred from homology"/>
<evidence type="ECO:0000255" key="1">
    <source>
        <dbReference type="HAMAP-Rule" id="MF_00161"/>
    </source>
</evidence>
<organism>
    <name type="scientific">Acinetobacter baumannii (strain ATCC 17978 / DSM 105126 / CIP 53.77 / LMG 1025 / NCDC KC755 / 5377)</name>
    <dbReference type="NCBI Taxonomy" id="400667"/>
    <lineage>
        <taxon>Bacteria</taxon>
        <taxon>Pseudomonadati</taxon>
        <taxon>Pseudomonadota</taxon>
        <taxon>Gammaproteobacteria</taxon>
        <taxon>Moraxellales</taxon>
        <taxon>Moraxellaceae</taxon>
        <taxon>Acinetobacter</taxon>
        <taxon>Acinetobacter calcoaceticus/baumannii complex</taxon>
    </lineage>
</organism>
<feature type="chain" id="PRO_1000097226" description="Lipoprotein signal peptidase">
    <location>
        <begin position="1"/>
        <end position="176"/>
    </location>
</feature>
<feature type="transmembrane region" description="Helical" evidence="1">
    <location>
        <begin position="10"/>
        <end position="30"/>
    </location>
</feature>
<feature type="transmembrane region" description="Helical" evidence="1">
    <location>
        <begin position="48"/>
        <end position="68"/>
    </location>
</feature>
<feature type="transmembrane region" description="Helical" evidence="1">
    <location>
        <begin position="78"/>
        <end position="98"/>
    </location>
</feature>
<feature type="transmembrane region" description="Helical" evidence="1">
    <location>
        <begin position="102"/>
        <end position="122"/>
    </location>
</feature>
<feature type="transmembrane region" description="Helical" evidence="1">
    <location>
        <begin position="141"/>
        <end position="161"/>
    </location>
</feature>
<feature type="active site" evidence="1">
    <location>
        <position position="131"/>
    </location>
</feature>
<feature type="active site" evidence="1">
    <location>
        <position position="149"/>
    </location>
</feature>
<protein>
    <recommendedName>
        <fullName evidence="1">Lipoprotein signal peptidase</fullName>
        <ecNumber evidence="1">3.4.23.36</ecNumber>
    </recommendedName>
    <alternativeName>
        <fullName evidence="1">Prolipoprotein signal peptidase</fullName>
    </alternativeName>
    <alternativeName>
        <fullName evidence="1">Signal peptidase II</fullName>
        <shortName evidence="1">SPase II</shortName>
    </alternativeName>
</protein>
<dbReference type="EC" id="3.4.23.36" evidence="1"/>
<dbReference type="EMBL" id="CP000521">
    <property type="protein sequence ID" value="ABO10516.2"/>
    <property type="molecule type" value="Genomic_DNA"/>
</dbReference>
<dbReference type="RefSeq" id="WP_001133879.1">
    <property type="nucleotide sequence ID" value="NZ_CP053098.1"/>
</dbReference>
<dbReference type="SMR" id="A3M0S2"/>
<dbReference type="GeneID" id="92891982"/>
<dbReference type="KEGG" id="acb:A1S_0019"/>
<dbReference type="HOGENOM" id="CLU_083252_4_0_6"/>
<dbReference type="UniPathway" id="UPA00665"/>
<dbReference type="GO" id="GO:0005886">
    <property type="term" value="C:plasma membrane"/>
    <property type="evidence" value="ECO:0007669"/>
    <property type="project" value="UniProtKB-SubCell"/>
</dbReference>
<dbReference type="GO" id="GO:0004190">
    <property type="term" value="F:aspartic-type endopeptidase activity"/>
    <property type="evidence" value="ECO:0007669"/>
    <property type="project" value="UniProtKB-UniRule"/>
</dbReference>
<dbReference type="GO" id="GO:0006508">
    <property type="term" value="P:proteolysis"/>
    <property type="evidence" value="ECO:0007669"/>
    <property type="project" value="UniProtKB-KW"/>
</dbReference>
<dbReference type="HAMAP" id="MF_00161">
    <property type="entry name" value="LspA"/>
    <property type="match status" value="1"/>
</dbReference>
<dbReference type="InterPro" id="IPR001872">
    <property type="entry name" value="Peptidase_A8"/>
</dbReference>
<dbReference type="NCBIfam" id="TIGR00077">
    <property type="entry name" value="lspA"/>
    <property type="match status" value="1"/>
</dbReference>
<dbReference type="PANTHER" id="PTHR33695">
    <property type="entry name" value="LIPOPROTEIN SIGNAL PEPTIDASE"/>
    <property type="match status" value="1"/>
</dbReference>
<dbReference type="PANTHER" id="PTHR33695:SF1">
    <property type="entry name" value="LIPOPROTEIN SIGNAL PEPTIDASE"/>
    <property type="match status" value="1"/>
</dbReference>
<dbReference type="Pfam" id="PF01252">
    <property type="entry name" value="Peptidase_A8"/>
    <property type="match status" value="1"/>
</dbReference>
<dbReference type="PRINTS" id="PR00781">
    <property type="entry name" value="LIPOSIGPTASE"/>
</dbReference>
<dbReference type="PROSITE" id="PS00855">
    <property type="entry name" value="SPASE_II"/>
    <property type="match status" value="1"/>
</dbReference>